<protein>
    <recommendedName>
        <fullName evidence="1">Chaperonin GroEL 2</fullName>
        <ecNumber evidence="1">5.6.1.7</ecNumber>
    </recommendedName>
    <alternativeName>
        <fullName evidence="1">60 kDa chaperonin 2</fullName>
    </alternativeName>
    <alternativeName>
        <fullName evidence="1">Chaperonin-60 2</fullName>
        <shortName evidence="1">Cpn60 2</shortName>
    </alternativeName>
</protein>
<name>CH602_PROM5</name>
<comment type="function">
    <text evidence="1">Together with its co-chaperonin GroES, plays an essential role in assisting protein folding. The GroEL-GroES system forms a nano-cage that allows encapsulation of the non-native substrate proteins and provides a physical environment optimized to promote and accelerate protein folding.</text>
</comment>
<comment type="catalytic activity">
    <reaction evidence="1">
        <text>ATP + H2O + a folded polypeptide = ADP + phosphate + an unfolded polypeptide.</text>
        <dbReference type="EC" id="5.6.1.7"/>
    </reaction>
</comment>
<comment type="subunit">
    <text evidence="1">Forms a cylinder of 14 subunits composed of two heptameric rings stacked back-to-back. Interacts with the co-chaperonin GroES.</text>
</comment>
<comment type="subcellular location">
    <subcellularLocation>
        <location evidence="1">Cytoplasm</location>
    </subcellularLocation>
</comment>
<comment type="similarity">
    <text evidence="1">Belongs to the chaperonin (HSP60) family.</text>
</comment>
<proteinExistence type="inferred from homology"/>
<accession>A2BYG1</accession>
<reference key="1">
    <citation type="journal article" date="2007" name="PLoS Genet.">
        <title>Patterns and implications of gene gain and loss in the evolution of Prochlorococcus.</title>
        <authorList>
            <person name="Kettler G.C."/>
            <person name="Martiny A.C."/>
            <person name="Huang K."/>
            <person name="Zucker J."/>
            <person name="Coleman M.L."/>
            <person name="Rodrigue S."/>
            <person name="Chen F."/>
            <person name="Lapidus A."/>
            <person name="Ferriera S."/>
            <person name="Johnson J."/>
            <person name="Steglich C."/>
            <person name="Church G.M."/>
            <person name="Richardson P."/>
            <person name="Chisholm S.W."/>
        </authorList>
    </citation>
    <scope>NUCLEOTIDE SEQUENCE [LARGE SCALE GENOMIC DNA]</scope>
    <source>
        <strain>MIT 9515</strain>
    </source>
</reference>
<dbReference type="EC" id="5.6.1.7" evidence="1"/>
<dbReference type="EMBL" id="CP000552">
    <property type="protein sequence ID" value="ABM72822.1"/>
    <property type="molecule type" value="Genomic_DNA"/>
</dbReference>
<dbReference type="RefSeq" id="WP_011820917.1">
    <property type="nucleotide sequence ID" value="NC_008817.1"/>
</dbReference>
<dbReference type="SMR" id="A2BYG1"/>
<dbReference type="STRING" id="167542.P9515_16151"/>
<dbReference type="GeneID" id="60201397"/>
<dbReference type="KEGG" id="pmc:P9515_16151"/>
<dbReference type="eggNOG" id="COG0459">
    <property type="taxonomic scope" value="Bacteria"/>
</dbReference>
<dbReference type="HOGENOM" id="CLU_016503_3_0_3"/>
<dbReference type="OrthoDB" id="9766614at2"/>
<dbReference type="Proteomes" id="UP000001589">
    <property type="component" value="Chromosome"/>
</dbReference>
<dbReference type="GO" id="GO:0005737">
    <property type="term" value="C:cytoplasm"/>
    <property type="evidence" value="ECO:0007669"/>
    <property type="project" value="UniProtKB-SubCell"/>
</dbReference>
<dbReference type="GO" id="GO:0005524">
    <property type="term" value="F:ATP binding"/>
    <property type="evidence" value="ECO:0007669"/>
    <property type="project" value="UniProtKB-UniRule"/>
</dbReference>
<dbReference type="GO" id="GO:0140662">
    <property type="term" value="F:ATP-dependent protein folding chaperone"/>
    <property type="evidence" value="ECO:0007669"/>
    <property type="project" value="InterPro"/>
</dbReference>
<dbReference type="GO" id="GO:0016853">
    <property type="term" value="F:isomerase activity"/>
    <property type="evidence" value="ECO:0007669"/>
    <property type="project" value="UniProtKB-KW"/>
</dbReference>
<dbReference type="GO" id="GO:0051082">
    <property type="term" value="F:unfolded protein binding"/>
    <property type="evidence" value="ECO:0007669"/>
    <property type="project" value="UniProtKB-UniRule"/>
</dbReference>
<dbReference type="GO" id="GO:0042026">
    <property type="term" value="P:protein refolding"/>
    <property type="evidence" value="ECO:0007669"/>
    <property type="project" value="UniProtKB-UniRule"/>
</dbReference>
<dbReference type="CDD" id="cd03344">
    <property type="entry name" value="GroEL"/>
    <property type="match status" value="1"/>
</dbReference>
<dbReference type="FunFam" id="3.50.7.10:FF:000001">
    <property type="entry name" value="60 kDa chaperonin"/>
    <property type="match status" value="1"/>
</dbReference>
<dbReference type="Gene3D" id="3.50.7.10">
    <property type="entry name" value="GroEL"/>
    <property type="match status" value="1"/>
</dbReference>
<dbReference type="Gene3D" id="1.10.560.10">
    <property type="entry name" value="GroEL-like equatorial domain"/>
    <property type="match status" value="1"/>
</dbReference>
<dbReference type="Gene3D" id="3.30.260.10">
    <property type="entry name" value="TCP-1-like chaperonin intermediate domain"/>
    <property type="match status" value="1"/>
</dbReference>
<dbReference type="HAMAP" id="MF_00600">
    <property type="entry name" value="CH60"/>
    <property type="match status" value="1"/>
</dbReference>
<dbReference type="InterPro" id="IPR018370">
    <property type="entry name" value="Chaperonin_Cpn60_CS"/>
</dbReference>
<dbReference type="InterPro" id="IPR001844">
    <property type="entry name" value="Cpn60/GroEL"/>
</dbReference>
<dbReference type="InterPro" id="IPR002423">
    <property type="entry name" value="Cpn60/GroEL/TCP-1"/>
</dbReference>
<dbReference type="InterPro" id="IPR027409">
    <property type="entry name" value="GroEL-like_apical_dom_sf"/>
</dbReference>
<dbReference type="InterPro" id="IPR027413">
    <property type="entry name" value="GROEL-like_equatorial_sf"/>
</dbReference>
<dbReference type="InterPro" id="IPR027410">
    <property type="entry name" value="TCP-1-like_intermed_sf"/>
</dbReference>
<dbReference type="NCBIfam" id="TIGR02348">
    <property type="entry name" value="GroEL"/>
    <property type="match status" value="1"/>
</dbReference>
<dbReference type="NCBIfam" id="NF000592">
    <property type="entry name" value="PRK00013.1"/>
    <property type="match status" value="1"/>
</dbReference>
<dbReference type="NCBIfam" id="NF009487">
    <property type="entry name" value="PRK12849.1"/>
    <property type="match status" value="1"/>
</dbReference>
<dbReference type="NCBIfam" id="NF009488">
    <property type="entry name" value="PRK12850.1"/>
    <property type="match status" value="1"/>
</dbReference>
<dbReference type="NCBIfam" id="NF009489">
    <property type="entry name" value="PRK12851.1"/>
    <property type="match status" value="1"/>
</dbReference>
<dbReference type="PANTHER" id="PTHR45633">
    <property type="entry name" value="60 KDA HEAT SHOCK PROTEIN, MITOCHONDRIAL"/>
    <property type="match status" value="1"/>
</dbReference>
<dbReference type="Pfam" id="PF00118">
    <property type="entry name" value="Cpn60_TCP1"/>
    <property type="match status" value="1"/>
</dbReference>
<dbReference type="PRINTS" id="PR00298">
    <property type="entry name" value="CHAPERONIN60"/>
</dbReference>
<dbReference type="SUPFAM" id="SSF52029">
    <property type="entry name" value="GroEL apical domain-like"/>
    <property type="match status" value="1"/>
</dbReference>
<dbReference type="SUPFAM" id="SSF48592">
    <property type="entry name" value="GroEL equatorial domain-like"/>
    <property type="match status" value="2"/>
</dbReference>
<dbReference type="PROSITE" id="PS00296">
    <property type="entry name" value="CHAPERONINS_CPN60"/>
    <property type="match status" value="1"/>
</dbReference>
<keyword id="KW-0067">ATP-binding</keyword>
<keyword id="KW-0143">Chaperone</keyword>
<keyword id="KW-0963">Cytoplasm</keyword>
<keyword id="KW-0413">Isomerase</keyword>
<keyword id="KW-0547">Nucleotide-binding</keyword>
<evidence type="ECO:0000255" key="1">
    <source>
        <dbReference type="HAMAP-Rule" id="MF_00600"/>
    </source>
</evidence>
<gene>
    <name evidence="1" type="primary">groEL2</name>
    <name evidence="1" type="synonym">groL2</name>
    <name type="ordered locus">P9515_16151</name>
</gene>
<sequence length="544" mass="57519">MAKRIIYNEQARRALERGIDILAESVAVTLGPKGRNVVLEKKFGAPQIINDGVTIAKEIELEDHIENTGVALIRQAASKTNDAAGDGTTTATVLAHAMVKAGLRNVAAGANAITLKKGIDKATEFLVGKIEENSKPISDSTAIAQCGTIAAGNDEEVGEMIANAMDKVGKEGVISLEEGKSMTTELEVTEGMRFDKGYISPYFATDTERMEAVLDEPYILLTDKKIALVQDLVPVLEQIAKTGKPLVIIAEDIEKEALATLVVNRLRGVLNVAAVKAPGFGDRRKAMLEDMAVLTNGQLITEDAGLKLENATLEMLGTGRRITINKETTTIVAEGNEKAVNSRCDQIKKQMEETDSSYDKEKLQERLAKLAGGVAVIKVGAATETEMKDKKLRLEDAINATKAAVEEGIVPGGGTTLAHLAPILKEWADATLSGEELIGANIVEASLTAPLMRIAENAGSNGAVIAENVKSKPFNDGFNAATGEYVDMSSAGIVDPAKVTRSGLQNAASIAGMVLTTECIVADMPEKKESAPAGAPGMGGDFDY</sequence>
<feature type="chain" id="PRO_0000332047" description="Chaperonin GroEL 2">
    <location>
        <begin position="1"/>
        <end position="544"/>
    </location>
</feature>
<feature type="binding site" evidence="1">
    <location>
        <begin position="29"/>
        <end position="32"/>
    </location>
    <ligand>
        <name>ATP</name>
        <dbReference type="ChEBI" id="CHEBI:30616"/>
    </ligand>
</feature>
<feature type="binding site" evidence="1">
    <location>
        <begin position="86"/>
        <end position="90"/>
    </location>
    <ligand>
        <name>ATP</name>
        <dbReference type="ChEBI" id="CHEBI:30616"/>
    </ligand>
</feature>
<feature type="binding site" evidence="1">
    <location>
        <position position="413"/>
    </location>
    <ligand>
        <name>ATP</name>
        <dbReference type="ChEBI" id="CHEBI:30616"/>
    </ligand>
</feature>
<feature type="binding site" evidence="1">
    <location>
        <begin position="479"/>
        <end position="481"/>
    </location>
    <ligand>
        <name>ATP</name>
        <dbReference type="ChEBI" id="CHEBI:30616"/>
    </ligand>
</feature>
<feature type="binding site" evidence="1">
    <location>
        <position position="495"/>
    </location>
    <ligand>
        <name>ATP</name>
        <dbReference type="ChEBI" id="CHEBI:30616"/>
    </ligand>
</feature>
<organism>
    <name type="scientific">Prochlorococcus marinus (strain MIT 9515)</name>
    <dbReference type="NCBI Taxonomy" id="167542"/>
    <lineage>
        <taxon>Bacteria</taxon>
        <taxon>Bacillati</taxon>
        <taxon>Cyanobacteriota</taxon>
        <taxon>Cyanophyceae</taxon>
        <taxon>Synechococcales</taxon>
        <taxon>Prochlorococcaceae</taxon>
        <taxon>Prochlorococcus</taxon>
    </lineage>
</organism>